<protein>
    <recommendedName>
        <fullName evidence="1">Envelope glycoprotein H</fullName>
        <shortName evidence="1">gH</shortName>
    </recommendedName>
</protein>
<gene>
    <name evidence="1" type="primary">gH</name>
    <name type="ORF">UL22</name>
</gene>
<reference key="1">
    <citation type="journal article" date="1998" name="J. Virol.">
        <title>The genome sequence of herpes simplex virus type 2.</title>
        <authorList>
            <person name="Dolan A."/>
            <person name="Jamieson F.E."/>
            <person name="Cunningham C."/>
            <person name="Barnett B.C."/>
            <person name="McGeoch D.J."/>
        </authorList>
    </citation>
    <scope>NUCLEOTIDE SEQUENCE [LARGE SCALE GENOMIC DNA]</scope>
</reference>
<reference key="2">
    <citation type="journal article" date="2005" name="Virology">
        <title>Contribution of cysteine residues to the structure and function of herpes simplex virus gH/gL.</title>
        <authorList>
            <person name="Cairns T.M."/>
            <person name="Landsburg D.J."/>
            <person name="Whitbeck J.C."/>
            <person name="Eisenberg R.J."/>
            <person name="Cohen G.H."/>
        </authorList>
    </citation>
    <scope>DISULFIDE BOND</scope>
</reference>
<reference key="3">
    <citation type="journal article" date="2014" name="J. Virol.">
        <title>Herpes simplex virus type 2 glycoprotein H interacts with integrin alphavbeta3 to facilitate viral entry and calcium signaling in human genital tract epithelial cells.</title>
        <authorList>
            <person name="Cheshenko N."/>
            <person name="Trepanier J.B."/>
            <person name="Gonzalez P.A."/>
            <person name="Eugenin E.A."/>
            <person name="Jacobs W.R. Jr."/>
            <person name="Herold B.C."/>
        </authorList>
    </citation>
    <scope>FUNCTION</scope>
    <scope>INTERACTION WITH HOST ITGAV AND ITGB3</scope>
</reference>
<evidence type="ECO:0000255" key="1">
    <source>
        <dbReference type="HAMAP-Rule" id="MF_04033"/>
    </source>
</evidence>
<evidence type="ECO:0000256" key="2">
    <source>
        <dbReference type="SAM" id="MobiDB-lite"/>
    </source>
</evidence>
<evidence type="ECO:0000269" key="3">
    <source>
    </source>
</evidence>
<evidence type="ECO:0000305" key="4">
    <source>
    </source>
</evidence>
<evidence type="ECO:0007829" key="5">
    <source>
        <dbReference type="PDB" id="3M1C"/>
    </source>
</evidence>
<sequence length="838" mass="89705">MGPGLWVVMGVLVGVAGGHDTYWTEQIDPWFLHGLGLARTYWRDTNTGRLWLPNTPDASDPQRGRLAPPGELNLTTASVPMLRWYAERFCFVLVTTAEFPRDPGQLLYIPKTYLLGRPRNASLPELPEAGPTSRPPAEVTQLKGLSHNPGASALLRSRAWVTFAAAPDREGLTFPRGDDGATERHPDGRRNAPPPGPPAGTPRHPTTNLSIAHLHNASVTWLAARGLLRTPGRYVYLSPSASTWPVGVWTTGGLAFGCDAALVRARYGKGFMGLVISMRDSPPAEIIVVPADKTLARVGNPTDENAPAVLPGPPAGPRYRVFVLGAPTPADNGSALDALRRVAGYPEESTNYAQYMSRAYAEFLGEDPGSGTDARPSLFWRLAGLLASSGFAFVNAAHAHDAIRLSDLLGFLAHSRVLAGLAARGAAGCAADSVFLNVSVLDPAARLRLEARLGHLVAAILEREQSLVAHALGYQLAFVLDSPAAYGAVAPSAARLIDALYAEFLGGRALTAPMVRRALFYATAVLRAPFLAGAPSAEQRERARRGLLITTALCTSDVAAATHADLRAALARTDHQKNLFWLPDHFSPCAASLRFDLAEGGFILDALAMATRSDIPADVMAQQTRGVASVLTRWAHYNALIRAFVPEATHQCSGPSHNAEPRILVPITHNASYVVTHTPLPRGIGYKLTGVDVRRPLFITYLTATCEGHAREIEPKRLVRTENRRDLGLVGAVFLRYTPAGEVMSVLLVDTDATQQQLAQGPVAGTPNVFSSDVPSVALLLFPNGTVIHLLAFDTLPIATIAPGFLAASALGVVMITAALAGILRVVRTCVPFLWRRE</sequence>
<organism>
    <name type="scientific">Human herpesvirus 2 (strain HG52)</name>
    <name type="common">HHV-2</name>
    <name type="synonym">Human herpes simplex virus 2</name>
    <dbReference type="NCBI Taxonomy" id="10315"/>
    <lineage>
        <taxon>Viruses</taxon>
        <taxon>Duplodnaviria</taxon>
        <taxon>Heunggongvirae</taxon>
        <taxon>Peploviricota</taxon>
        <taxon>Herviviricetes</taxon>
        <taxon>Herpesvirales</taxon>
        <taxon>Orthoherpesviridae</taxon>
        <taxon>Alphaherpesvirinae</taxon>
        <taxon>Simplexvirus</taxon>
        <taxon>Simplexvirus humanalpha2</taxon>
        <taxon>Human herpesvirus 2</taxon>
    </lineage>
</organism>
<organismHost>
    <name type="scientific">Homo sapiens</name>
    <name type="common">Human</name>
    <dbReference type="NCBI Taxonomy" id="9606"/>
</organismHost>
<comment type="function">
    <text evidence="1 3">The heterodimer glycoprotein H-glycoprotein L is required for the fusion of viral and plasma membranes leading to virus entry into the host cell. Following initial binding to host receptor, membrane fusion is mediated by the fusion machinery composed of gB and the heterodimer gH/gL. May also be involved in the fusion between the virion envelope and the outer nuclear membrane during virion morphogenesis (By similarity). Interaction with host integrins ITGAV/ITGB3 triggers release of cytosolic Ca(2+) and FAK phosphorylation leading to efficient viral entry into host genital tract epithelial cells (PubMed:24942591).</text>
</comment>
<comment type="subunit">
    <text evidence="1 3">Interacts with glycoprotein L (gL); this interaction is necessary for the correct processing and cell surface expression of gH. The heterodimer gH/gL seems to interact with gB trimers during fusion. Interacts with host integrins ITGAV/ITGB3 to mediate viral entry into epithelial cells.</text>
</comment>
<comment type="subcellular location">
    <subcellularLocation>
        <location evidence="1">Virion membrane</location>
        <topology evidence="1">Single-pass type I membrane protein</topology>
    </subcellularLocation>
    <subcellularLocation>
        <location evidence="1">Host cell membrane</location>
        <topology evidence="1">Single-pass type I membrane protein</topology>
    </subcellularLocation>
    <subcellularLocation>
        <location evidence="1">Host endosome membrane</location>
        <topology evidence="1">Single-pass type I membrane protein</topology>
    </subcellularLocation>
    <text evidence="1">During virion morphogenesis, this protein probably accumulates in the endosomes and trans-Golgi where secondary envelopment occurs. It is probably transported to the cell surface from where it is endocytosed and directed to the trans-Golgi network (TGN).</text>
</comment>
<comment type="PTM">
    <text evidence="1">N-glycosylated, O-glycosylated, and sialylated.</text>
</comment>
<comment type="similarity">
    <text evidence="1">Belongs to the herpesviridae glycoprotein H family.</text>
</comment>
<proteinExistence type="evidence at protein level"/>
<keyword id="KW-0002">3D-structure</keyword>
<keyword id="KW-1015">Disulfide bond</keyword>
<keyword id="KW-1169">Fusion of virus membrane with host cell membrane</keyword>
<keyword id="KW-1168">Fusion of virus membrane with host membrane</keyword>
<keyword id="KW-0325">Glycoprotein</keyword>
<keyword id="KW-1032">Host cell membrane</keyword>
<keyword id="KW-1039">Host endosome</keyword>
<keyword id="KW-1043">Host membrane</keyword>
<keyword id="KW-0945">Host-virus interaction</keyword>
<keyword id="KW-0472">Membrane</keyword>
<keyword id="KW-1185">Reference proteome</keyword>
<keyword id="KW-0730">Sialic acid</keyword>
<keyword id="KW-0732">Signal</keyword>
<keyword id="KW-0812">Transmembrane</keyword>
<keyword id="KW-1133">Transmembrane helix</keyword>
<keyword id="KW-0261">Viral envelope protein</keyword>
<keyword id="KW-1162">Viral penetration into host cytoplasm</keyword>
<keyword id="KW-0946">Virion</keyword>
<keyword id="KW-1160">Virus entry into host cell</keyword>
<accession>P89445</accession>
<dbReference type="EMBL" id="Z86099">
    <property type="protein sequence ID" value="CAB06746.1"/>
    <property type="molecule type" value="Genomic_DNA"/>
</dbReference>
<dbReference type="PDB" id="3M1C">
    <property type="method" value="X-ray"/>
    <property type="resolution" value="3.00 A"/>
    <property type="chains" value="A=48-803"/>
</dbReference>
<dbReference type="PDBsum" id="3M1C"/>
<dbReference type="SMR" id="P89445"/>
<dbReference type="GlyCosmos" id="P89445">
    <property type="glycosylation" value="8 sites, No reported glycans"/>
</dbReference>
<dbReference type="EvolutionaryTrace" id="P89445"/>
<dbReference type="Proteomes" id="UP000001874">
    <property type="component" value="Segment"/>
</dbReference>
<dbReference type="GO" id="GO:0044175">
    <property type="term" value="C:host cell endosome membrane"/>
    <property type="evidence" value="ECO:0007669"/>
    <property type="project" value="UniProtKB-SubCell"/>
</dbReference>
<dbReference type="GO" id="GO:0020002">
    <property type="term" value="C:host cell plasma membrane"/>
    <property type="evidence" value="ECO:0007669"/>
    <property type="project" value="UniProtKB-SubCell"/>
</dbReference>
<dbReference type="GO" id="GO:0016020">
    <property type="term" value="C:membrane"/>
    <property type="evidence" value="ECO:0007669"/>
    <property type="project" value="UniProtKB-KW"/>
</dbReference>
<dbReference type="GO" id="GO:0019031">
    <property type="term" value="C:viral envelope"/>
    <property type="evidence" value="ECO:0007669"/>
    <property type="project" value="UniProtKB-KW"/>
</dbReference>
<dbReference type="GO" id="GO:0055036">
    <property type="term" value="C:virion membrane"/>
    <property type="evidence" value="ECO:0007669"/>
    <property type="project" value="UniProtKB-SubCell"/>
</dbReference>
<dbReference type="GO" id="GO:0019064">
    <property type="term" value="P:fusion of virus membrane with host plasma membrane"/>
    <property type="evidence" value="ECO:0007669"/>
    <property type="project" value="UniProtKB-KW"/>
</dbReference>
<dbReference type="GO" id="GO:0046718">
    <property type="term" value="P:symbiont entry into host cell"/>
    <property type="evidence" value="ECO:0007669"/>
    <property type="project" value="UniProtKB-KW"/>
</dbReference>
<dbReference type="Gene3D" id="1.20.58.1340">
    <property type="match status" value="1"/>
</dbReference>
<dbReference type="Gene3D" id="3.10.360.40">
    <property type="match status" value="1"/>
</dbReference>
<dbReference type="Gene3D" id="3.30.500.50">
    <property type="match status" value="1"/>
</dbReference>
<dbReference type="Gene3D" id="2.60.40.3190">
    <property type="entry name" value="Herpesvirus glycoprotein H, C-terminal domain"/>
    <property type="match status" value="1"/>
</dbReference>
<dbReference type="HAMAP" id="MF_04033">
    <property type="entry name" value="HSV_GH"/>
    <property type="match status" value="1"/>
</dbReference>
<dbReference type="InterPro" id="IPR003493">
    <property type="entry name" value="Herpes_gH"/>
</dbReference>
<dbReference type="InterPro" id="IPR035305">
    <property type="entry name" value="Herpes_glycoH_C"/>
</dbReference>
<dbReference type="InterPro" id="IPR038172">
    <property type="entry name" value="Herpes_glycoH_C_sf"/>
</dbReference>
<dbReference type="Pfam" id="PF17488">
    <property type="entry name" value="Herpes_glycoH_C"/>
    <property type="match status" value="1"/>
</dbReference>
<dbReference type="Pfam" id="PF02489">
    <property type="entry name" value="Herpes_glycop_H"/>
    <property type="match status" value="1"/>
</dbReference>
<feature type="signal peptide" evidence="1">
    <location>
        <begin position="1"/>
        <end position="18"/>
    </location>
</feature>
<feature type="chain" id="PRO_0000436657" description="Envelope glycoprotein H" evidence="1">
    <location>
        <begin position="19"/>
        <end position="838"/>
    </location>
</feature>
<feature type="topological domain" description="Virion surface" evidence="1">
    <location>
        <begin position="21"/>
        <end position="803"/>
    </location>
</feature>
<feature type="transmembrane region" description="Helical" evidence="1">
    <location>
        <begin position="804"/>
        <end position="824"/>
    </location>
</feature>
<feature type="topological domain" description="Intravirion" evidence="1">
    <location>
        <begin position="825"/>
        <end position="838"/>
    </location>
</feature>
<feature type="region of interest" description="Disordered" evidence="2">
    <location>
        <begin position="171"/>
        <end position="207"/>
    </location>
</feature>
<feature type="region of interest" description="Interaction with gL" evidence="1">
    <location>
        <begin position="259"/>
        <end position="323"/>
    </location>
</feature>
<feature type="compositionally biased region" description="Basic and acidic residues" evidence="2">
    <location>
        <begin position="171"/>
        <end position="190"/>
    </location>
</feature>
<feature type="glycosylation site" description="N-linked (GlcNAc...) asparagine; by host" evidence="1">
    <location>
        <position position="73"/>
    </location>
</feature>
<feature type="glycosylation site" description="N-linked (GlcNAc...) asparagine; by host" evidence="1">
    <location>
        <position position="120"/>
    </location>
</feature>
<feature type="glycosylation site" description="N-linked (GlcNAc...) asparagine; by host" evidence="1">
    <location>
        <position position="208"/>
    </location>
</feature>
<feature type="glycosylation site" description="N-linked (GlcNAc...) asparagine; by host" evidence="1">
    <location>
        <position position="216"/>
    </location>
</feature>
<feature type="glycosylation site" description="N-linked (GlcNAc...) asparagine; by host" evidence="1">
    <location>
        <position position="332"/>
    </location>
</feature>
<feature type="glycosylation site" description="N-linked (GlcNAc...) asparagine; by host" evidence="1">
    <location>
        <position position="437"/>
    </location>
</feature>
<feature type="glycosylation site" description="N-linked (GlcNAc...) asparagine; by host" evidence="1">
    <location>
        <position position="670"/>
    </location>
</feature>
<feature type="glycosylation site" description="N-linked (GlcNAc...) asparagine; by host" evidence="1">
    <location>
        <position position="784"/>
    </location>
</feature>
<feature type="disulfide bond" evidence="4">
    <location>
        <begin position="258"/>
        <end position="429"/>
    </location>
</feature>
<feature type="helix" evidence="5">
    <location>
        <begin position="63"/>
        <end position="66"/>
    </location>
</feature>
<feature type="helix" evidence="5">
    <location>
        <begin position="70"/>
        <end position="72"/>
    </location>
</feature>
<feature type="turn" evidence="5">
    <location>
        <begin position="76"/>
        <end position="78"/>
    </location>
</feature>
<feature type="strand" evidence="5">
    <location>
        <begin position="89"/>
        <end position="95"/>
    </location>
</feature>
<feature type="turn" evidence="5">
    <location>
        <begin position="97"/>
        <end position="101"/>
    </location>
</feature>
<feature type="strand" evidence="5">
    <location>
        <begin position="105"/>
        <end position="110"/>
    </location>
</feature>
<feature type="helix" evidence="5">
    <location>
        <begin position="111"/>
        <end position="114"/>
    </location>
</feature>
<feature type="strand" evidence="5">
    <location>
        <begin position="139"/>
        <end position="141"/>
    </location>
</feature>
<feature type="strand" evidence="5">
    <location>
        <begin position="144"/>
        <end position="147"/>
    </location>
</feature>
<feature type="helix" evidence="5">
    <location>
        <begin position="151"/>
        <end position="155"/>
    </location>
</feature>
<feature type="turn" evidence="5">
    <location>
        <begin position="159"/>
        <end position="161"/>
    </location>
</feature>
<feature type="strand" evidence="5">
    <location>
        <begin position="206"/>
        <end position="208"/>
    </location>
</feature>
<feature type="helix" evidence="5">
    <location>
        <begin position="211"/>
        <end position="215"/>
    </location>
</feature>
<feature type="helix" evidence="5">
    <location>
        <begin position="217"/>
        <end position="219"/>
    </location>
</feature>
<feature type="strand" evidence="5">
    <location>
        <begin position="232"/>
        <end position="236"/>
    </location>
</feature>
<feature type="strand" evidence="5">
    <location>
        <begin position="246"/>
        <end position="258"/>
    </location>
</feature>
<feature type="strand" evidence="5">
    <location>
        <begin position="261"/>
        <end position="268"/>
    </location>
</feature>
<feature type="strand" evidence="5">
    <location>
        <begin position="271"/>
        <end position="278"/>
    </location>
</feature>
<feature type="strand" evidence="5">
    <location>
        <begin position="281"/>
        <end position="290"/>
    </location>
</feature>
<feature type="strand" evidence="5">
    <location>
        <begin position="304"/>
        <end position="306"/>
    </location>
</feature>
<feature type="strand" evidence="5">
    <location>
        <begin position="317"/>
        <end position="324"/>
    </location>
</feature>
<feature type="helix" evidence="5">
    <location>
        <begin position="333"/>
        <end position="344"/>
    </location>
</feature>
<feature type="helix" evidence="5">
    <location>
        <begin position="345"/>
        <end position="347"/>
    </location>
</feature>
<feature type="helix" evidence="5">
    <location>
        <begin position="352"/>
        <end position="364"/>
    </location>
</feature>
<feature type="turn" evidence="5">
    <location>
        <begin position="369"/>
        <end position="372"/>
    </location>
</feature>
<feature type="helix" evidence="5">
    <location>
        <begin position="376"/>
        <end position="400"/>
    </location>
</feature>
<feature type="helix" evidence="5">
    <location>
        <begin position="405"/>
        <end position="425"/>
    </location>
</feature>
<feature type="helix" evidence="5">
    <location>
        <begin position="431"/>
        <end position="433"/>
    </location>
</feature>
<feature type="strand" evidence="5">
    <location>
        <begin position="435"/>
        <end position="439"/>
    </location>
</feature>
<feature type="helix" evidence="5">
    <location>
        <begin position="443"/>
        <end position="463"/>
    </location>
</feature>
<feature type="helix" evidence="5">
    <location>
        <begin position="467"/>
        <end position="480"/>
    </location>
</feature>
<feature type="helix" evidence="5">
    <location>
        <begin position="483"/>
        <end position="506"/>
    </location>
</feature>
<feature type="helix" evidence="5">
    <location>
        <begin position="513"/>
        <end position="531"/>
    </location>
</feature>
<feature type="helix" evidence="5">
    <location>
        <begin position="537"/>
        <end position="553"/>
    </location>
</feature>
<feature type="helix" evidence="5">
    <location>
        <begin position="556"/>
        <end position="572"/>
    </location>
</feature>
<feature type="strand" evidence="5">
    <location>
        <begin position="575"/>
        <end position="578"/>
    </location>
</feature>
<feature type="helix" evidence="5">
    <location>
        <begin position="582"/>
        <end position="585"/>
    </location>
</feature>
<feature type="helix" evidence="5">
    <location>
        <begin position="588"/>
        <end position="591"/>
    </location>
</feature>
<feature type="strand" evidence="5">
    <location>
        <begin position="592"/>
        <end position="594"/>
    </location>
</feature>
<feature type="helix" evidence="5">
    <location>
        <begin position="600"/>
        <end position="608"/>
    </location>
</feature>
<feature type="helix" evidence="5">
    <location>
        <begin position="617"/>
        <end position="635"/>
    </location>
</feature>
<feature type="helix" evidence="5">
    <location>
        <begin position="638"/>
        <end position="644"/>
    </location>
</feature>
<feature type="strand" evidence="5">
    <location>
        <begin position="662"/>
        <end position="665"/>
    </location>
</feature>
<feature type="strand" evidence="5">
    <location>
        <begin position="668"/>
        <end position="670"/>
    </location>
</feature>
<feature type="strand" evidence="5">
    <location>
        <begin position="672"/>
        <end position="678"/>
    </location>
</feature>
<feature type="strand" evidence="5">
    <location>
        <begin position="681"/>
        <end position="687"/>
    </location>
</feature>
<feature type="strand" evidence="5">
    <location>
        <begin position="698"/>
        <end position="702"/>
    </location>
</feature>
<feature type="strand" evidence="5">
    <location>
        <begin position="708"/>
        <end position="711"/>
    </location>
</feature>
<feature type="strand" evidence="5">
    <location>
        <begin position="733"/>
        <end position="737"/>
    </location>
</feature>
<feature type="strand" evidence="5">
    <location>
        <begin position="743"/>
        <end position="748"/>
    </location>
</feature>
<feature type="helix" evidence="5">
    <location>
        <begin position="752"/>
        <end position="759"/>
    </location>
</feature>
<feature type="strand" evidence="5">
    <location>
        <begin position="776"/>
        <end position="781"/>
    </location>
</feature>
<feature type="strand" evidence="5">
    <location>
        <begin position="787"/>
        <end position="789"/>
    </location>
</feature>
<feature type="helix" evidence="5">
    <location>
        <begin position="791"/>
        <end position="793"/>
    </location>
</feature>
<name>GH_HHV2H</name>